<name>PITX1_MOUSE</name>
<proteinExistence type="evidence at transcript level"/>
<comment type="function">
    <text evidence="1 7 8">Sequence-specific transcription factor that binds gene promoters and activates their transcription. May play a role in the development of anterior structures, and in particular, the brain and facies and in specifying the identity or structure of hindlimb. Can independently activate and synergize with PIT-1 on pituitary-specific target gene promoters, thus may subserve functions in generating both precursor and specific cell phenotypes in the anterior pituitary gland and in several other organs. Can activate pituitary transcription of the proopiomelanocortin gene.</text>
</comment>
<comment type="subunit">
    <text evidence="2">Interacts with POU1F1.</text>
</comment>
<comment type="subcellular location">
    <subcellularLocation>
        <location>Nucleus</location>
    </subcellularLocation>
</comment>
<comment type="tissue specificity">
    <text>Expressed in primordial Rathke pouch, oral epithelium, first branchial arch, duodenum, and hindlimb.</text>
</comment>
<comment type="developmental stage">
    <text evidence="9">Expressed throughout pituitary development. Not found in 8 dpc embryos but seen in embryos at 8.5 dpc in the region of the first branchial arch and ventral portion of the caudal-most region of the embryo. At 9.5 dpc observed in the hindlimb buds, maxillary and mandibular components of the first branchial arch and Rathke pouch and the pattern of expression continues through 10.5 dpc at 11.5 dpc also found in ventral mesenchyme covering the abdominal cavity and in the nasal epithelium. At 17.5 dpc expressed in derivatives of the first branchial arch, including tongue and mandible as well as duodenum, salivary glands, nasal epithelium and condensing cartilage in the hindlimbs.</text>
</comment>
<comment type="similarity">
    <text evidence="10">Belongs to the paired homeobox family. Bicoid subfamily.</text>
</comment>
<accession>P70314</accession>
<accession>O54742</accession>
<accession>P70427</accession>
<gene>
    <name type="primary">Pitx1</name>
    <name type="synonym">Bft</name>
    <name type="synonym">Potx</name>
    <name type="synonym">Ptx1</name>
</gene>
<reference key="1">
    <citation type="journal article" date="1996" name="Proc. Natl. Acad. Sci. U.S.A.">
        <title>P-OTX: a PIT-1-interacting homeodomain factor expressed during anterior pituitary gland development.</title>
        <authorList>
            <person name="Szeto D.P."/>
            <person name="Ryan A.K."/>
            <person name="O'Connell S.M."/>
            <person name="Rosenfeld M.G."/>
        </authorList>
    </citation>
    <scope>NUCLEOTIDE SEQUENCE [MRNA]</scope>
    <source>
        <tissue>Pituitary</tissue>
    </source>
</reference>
<reference key="2">
    <citation type="journal article" date="1996" name="Genes Dev.">
        <title>Ptx1, a bicoid-related homeo box transcription factor involved in transcription of the pro-opiomelanocortin gene.</title>
        <authorList>
            <person name="Lamonerie T."/>
            <person name="Tremblay J.J."/>
            <person name="Lanctot C."/>
            <person name="Therrien M."/>
            <person name="Gauthier Y."/>
            <person name="Drouin J."/>
        </authorList>
    </citation>
    <scope>NUCLEOTIDE SEQUENCE [MRNA]</scope>
    <source>
        <tissue>Pituitary</tissue>
    </source>
</reference>
<reference key="3">
    <citation type="journal article" date="2004" name="Genome Res.">
        <title>The status, quality, and expansion of the NIH full-length cDNA project: the Mammalian Gene Collection (MGC).</title>
        <authorList>
            <consortium name="The MGC Project Team"/>
        </authorList>
    </citation>
    <scope>NUCLEOTIDE SEQUENCE [LARGE SCALE MRNA]</scope>
    <source>
        <strain>FVB/N</strain>
        <tissue>Salivary gland</tissue>
    </source>
</reference>
<reference key="4">
    <citation type="journal article" date="1997" name="Genomics">
        <title>Backfoot, a novel homeobox gene, maps to human chromosome 5 (BFT) and mouse chromosome 13 (Bft).</title>
        <authorList>
            <person name="Shang J."/>
            <person name="Li X."/>
            <person name="Ring H.Z."/>
            <person name="Clayton D.A."/>
            <person name="Francke U."/>
        </authorList>
    </citation>
    <scope>NUCLEOTIDE SEQUENCE [MRNA] OF 133-315</scope>
</reference>
<reference key="5">
    <citation type="journal article" date="1997" name="Development">
        <title>The bicoid-related homeoprotein Ptx1 defines the most anterior domain of the embryo and differentiates posterior from anterior lateral mesoderm.</title>
        <authorList>
            <person name="Lanctot C."/>
            <person name="Lamolet B."/>
            <person name="Drouin J."/>
        </authorList>
    </citation>
    <scope>DEVELOPMENTAL STAGE</scope>
</reference>
<evidence type="ECO:0000250" key="1">
    <source>
        <dbReference type="UniProtKB" id="P56673"/>
    </source>
</evidence>
<evidence type="ECO:0000250" key="2">
    <source>
        <dbReference type="UniProtKB" id="P78337"/>
    </source>
</evidence>
<evidence type="ECO:0000255" key="3"/>
<evidence type="ECO:0000255" key="4">
    <source>
        <dbReference type="PROSITE-ProRule" id="PRU00108"/>
    </source>
</evidence>
<evidence type="ECO:0000255" key="5">
    <source>
        <dbReference type="PROSITE-ProRule" id="PRU00138"/>
    </source>
</evidence>
<evidence type="ECO:0000256" key="6">
    <source>
        <dbReference type="SAM" id="MobiDB-lite"/>
    </source>
</evidence>
<evidence type="ECO:0000269" key="7">
    <source>
    </source>
</evidence>
<evidence type="ECO:0000269" key="8">
    <source>
    </source>
</evidence>
<evidence type="ECO:0000269" key="9">
    <source>
    </source>
</evidence>
<evidence type="ECO:0000305" key="10"/>
<keyword id="KW-0007">Acetylation</keyword>
<keyword id="KW-0010">Activator</keyword>
<keyword id="KW-0217">Developmental protein</keyword>
<keyword id="KW-0238">DNA-binding</keyword>
<keyword id="KW-0371">Homeobox</keyword>
<keyword id="KW-0539">Nucleus</keyword>
<keyword id="KW-0597">Phosphoprotein</keyword>
<keyword id="KW-1185">Reference proteome</keyword>
<keyword id="KW-0804">Transcription</keyword>
<keyword id="KW-0805">Transcription regulation</keyword>
<protein>
    <recommendedName>
        <fullName>Pituitary homeobox 1</fullName>
    </recommendedName>
    <alternativeName>
        <fullName>Hindlimb-expressed homeobox protein backfoot</fullName>
    </alternativeName>
    <alternativeName>
        <fullName>Homeobox protein P-OTX</fullName>
    </alternativeName>
    <alternativeName>
        <fullName>Homeobox protein PITX1</fullName>
    </alternativeName>
    <alternativeName>
        <fullName>Paired-like homeodomain transcription factor 1</fullName>
    </alternativeName>
    <alternativeName>
        <fullName>Pituitary OTX-related factor</fullName>
    </alternativeName>
</protein>
<dbReference type="EMBL" id="U54499">
    <property type="protein sequence ID" value="AAC52716.1"/>
    <property type="molecule type" value="mRNA"/>
</dbReference>
<dbReference type="EMBL" id="U71206">
    <property type="protein sequence ID" value="AAB16860.1"/>
    <property type="molecule type" value="mRNA"/>
</dbReference>
<dbReference type="EMBL" id="BC012696">
    <property type="protein sequence ID" value="AAH12696.1"/>
    <property type="molecule type" value="mRNA"/>
</dbReference>
<dbReference type="EMBL" id="U70371">
    <property type="protein sequence ID" value="AAC53059.1"/>
    <property type="molecule type" value="mRNA"/>
</dbReference>
<dbReference type="CCDS" id="CCDS26556.1"/>
<dbReference type="RefSeq" id="NP_035227.1">
    <property type="nucleotide sequence ID" value="NM_011097.2"/>
</dbReference>
<dbReference type="RefSeq" id="XP_006517220.1">
    <property type="nucleotide sequence ID" value="XM_006517157.5"/>
</dbReference>
<dbReference type="RefSeq" id="XP_006517221.1">
    <property type="nucleotide sequence ID" value="XM_006517158.5"/>
</dbReference>
<dbReference type="SMR" id="P70314"/>
<dbReference type="BioGRID" id="202186">
    <property type="interactions" value="4"/>
</dbReference>
<dbReference type="FunCoup" id="P70314">
    <property type="interactions" value="361"/>
</dbReference>
<dbReference type="STRING" id="10090.ENSMUSP00000021968"/>
<dbReference type="GlyGen" id="P70314">
    <property type="glycosylation" value="1 site"/>
</dbReference>
<dbReference type="PhosphoSitePlus" id="P70314"/>
<dbReference type="PaxDb" id="10090-ENSMUSP00000021968"/>
<dbReference type="ProteomicsDB" id="288174"/>
<dbReference type="Antibodypedia" id="14722">
    <property type="antibodies" value="233 antibodies from 33 providers"/>
</dbReference>
<dbReference type="DNASU" id="18740"/>
<dbReference type="Ensembl" id="ENSMUST00000021968.7">
    <property type="protein sequence ID" value="ENSMUSP00000021968.6"/>
    <property type="gene ID" value="ENSMUSG00000021506.8"/>
</dbReference>
<dbReference type="GeneID" id="18740"/>
<dbReference type="KEGG" id="mmu:18740"/>
<dbReference type="UCSC" id="uc007qsd.1">
    <property type="organism name" value="mouse"/>
</dbReference>
<dbReference type="AGR" id="MGI:107374"/>
<dbReference type="CTD" id="5307"/>
<dbReference type="MGI" id="MGI:107374">
    <property type="gene designation" value="Pitx1"/>
</dbReference>
<dbReference type="VEuPathDB" id="HostDB:ENSMUSG00000021506"/>
<dbReference type="eggNOG" id="KOG0486">
    <property type="taxonomic scope" value="Eukaryota"/>
</dbReference>
<dbReference type="GeneTree" id="ENSGT00940000154518"/>
<dbReference type="HOGENOM" id="CLU_030301_0_0_1"/>
<dbReference type="InParanoid" id="P70314"/>
<dbReference type="OMA" id="YVDLGGM"/>
<dbReference type="OrthoDB" id="6159439at2759"/>
<dbReference type="PhylomeDB" id="P70314"/>
<dbReference type="TreeFam" id="TF351940"/>
<dbReference type="BioGRID-ORCS" id="18740">
    <property type="hits" value="3 hits in 79 CRISPR screens"/>
</dbReference>
<dbReference type="ChiTaRS" id="Pitx1">
    <property type="organism name" value="mouse"/>
</dbReference>
<dbReference type="PRO" id="PR:P70314"/>
<dbReference type="Proteomes" id="UP000000589">
    <property type="component" value="Chromosome 13"/>
</dbReference>
<dbReference type="RNAct" id="P70314">
    <property type="molecule type" value="protein"/>
</dbReference>
<dbReference type="Bgee" id="ENSMUSG00000021506">
    <property type="expression patterns" value="Expressed in mouth mucosa and 151 other cell types or tissues"/>
</dbReference>
<dbReference type="ExpressionAtlas" id="P70314">
    <property type="expression patterns" value="baseline and differential"/>
</dbReference>
<dbReference type="GO" id="GO:0005737">
    <property type="term" value="C:cytoplasm"/>
    <property type="evidence" value="ECO:0000314"/>
    <property type="project" value="MGI"/>
</dbReference>
<dbReference type="GO" id="GO:0005634">
    <property type="term" value="C:nucleus"/>
    <property type="evidence" value="ECO:0000314"/>
    <property type="project" value="MGI"/>
</dbReference>
<dbReference type="GO" id="GO:0005667">
    <property type="term" value="C:transcription regulator complex"/>
    <property type="evidence" value="ECO:0000314"/>
    <property type="project" value="MGI"/>
</dbReference>
<dbReference type="GO" id="GO:0001228">
    <property type="term" value="F:DNA-binding transcription activator activity, RNA polymerase II-specific"/>
    <property type="evidence" value="ECO:0000314"/>
    <property type="project" value="NTNU_SB"/>
</dbReference>
<dbReference type="GO" id="GO:0000978">
    <property type="term" value="F:RNA polymerase II cis-regulatory region sequence-specific DNA binding"/>
    <property type="evidence" value="ECO:0000314"/>
    <property type="project" value="NTNU_SB"/>
</dbReference>
<dbReference type="GO" id="GO:0061629">
    <property type="term" value="F:RNA polymerase II-specific DNA-binding transcription factor binding"/>
    <property type="evidence" value="ECO:0007669"/>
    <property type="project" value="Ensembl"/>
</dbReference>
<dbReference type="GO" id="GO:0014707">
    <property type="term" value="P:branchiomeric skeletal muscle development"/>
    <property type="evidence" value="ECO:0000315"/>
    <property type="project" value="MGI"/>
</dbReference>
<dbReference type="GO" id="GO:0051216">
    <property type="term" value="P:cartilage development"/>
    <property type="evidence" value="ECO:0000315"/>
    <property type="project" value="MGI"/>
</dbReference>
<dbReference type="GO" id="GO:0035116">
    <property type="term" value="P:embryonic hindlimb morphogenesis"/>
    <property type="evidence" value="ECO:0000315"/>
    <property type="project" value="CACAO"/>
</dbReference>
<dbReference type="GO" id="GO:0035137">
    <property type="term" value="P:hindlimb morphogenesis"/>
    <property type="evidence" value="ECO:0000314"/>
    <property type="project" value="MGI"/>
</dbReference>
<dbReference type="GO" id="GO:0048625">
    <property type="term" value="P:myoblast fate commitment"/>
    <property type="evidence" value="ECO:0000315"/>
    <property type="project" value="MGI"/>
</dbReference>
<dbReference type="GO" id="GO:0045892">
    <property type="term" value="P:negative regulation of DNA-templated transcription"/>
    <property type="evidence" value="ECO:0000315"/>
    <property type="project" value="CACAO"/>
</dbReference>
<dbReference type="GO" id="GO:0021983">
    <property type="term" value="P:pituitary gland development"/>
    <property type="evidence" value="ECO:0000315"/>
    <property type="project" value="MGI"/>
</dbReference>
<dbReference type="GO" id="GO:0045944">
    <property type="term" value="P:positive regulation of transcription by RNA polymerase II"/>
    <property type="evidence" value="ECO:0000314"/>
    <property type="project" value="NTNU_SB"/>
</dbReference>
<dbReference type="GO" id="GO:0001501">
    <property type="term" value="P:skeletal system development"/>
    <property type="evidence" value="ECO:0000315"/>
    <property type="project" value="MGI"/>
</dbReference>
<dbReference type="CDD" id="cd00086">
    <property type="entry name" value="homeodomain"/>
    <property type="match status" value="1"/>
</dbReference>
<dbReference type="FunFam" id="1.10.10.60:FF:000031">
    <property type="entry name" value="Homeobox protein"/>
    <property type="match status" value="1"/>
</dbReference>
<dbReference type="Gene3D" id="1.10.10.60">
    <property type="entry name" value="Homeodomain-like"/>
    <property type="match status" value="1"/>
</dbReference>
<dbReference type="InterPro" id="IPR001356">
    <property type="entry name" value="HD"/>
</dbReference>
<dbReference type="InterPro" id="IPR017970">
    <property type="entry name" value="Homeobox_CS"/>
</dbReference>
<dbReference type="InterPro" id="IPR016233">
    <property type="entry name" value="Homeobox_Pitx/unc30"/>
</dbReference>
<dbReference type="InterPro" id="IPR009057">
    <property type="entry name" value="Homeodomain-like_sf"/>
</dbReference>
<dbReference type="InterPro" id="IPR003654">
    <property type="entry name" value="OAR_dom"/>
</dbReference>
<dbReference type="PANTHER" id="PTHR45882:SF1">
    <property type="entry name" value="PITUITARY HOMEOBOX 1"/>
    <property type="match status" value="1"/>
</dbReference>
<dbReference type="PANTHER" id="PTHR45882">
    <property type="entry name" value="PITUITARY HOMEOBOX HOMOLOG PTX1"/>
    <property type="match status" value="1"/>
</dbReference>
<dbReference type="Pfam" id="PF00046">
    <property type="entry name" value="Homeodomain"/>
    <property type="match status" value="1"/>
</dbReference>
<dbReference type="Pfam" id="PF03826">
    <property type="entry name" value="OAR"/>
    <property type="match status" value="1"/>
</dbReference>
<dbReference type="PIRSF" id="PIRSF000563">
    <property type="entry name" value="Homeobox_protein_Pitx/Unc30"/>
    <property type="match status" value="1"/>
</dbReference>
<dbReference type="SMART" id="SM00389">
    <property type="entry name" value="HOX"/>
    <property type="match status" value="1"/>
</dbReference>
<dbReference type="SUPFAM" id="SSF46689">
    <property type="entry name" value="Homeodomain-like"/>
    <property type="match status" value="1"/>
</dbReference>
<dbReference type="PROSITE" id="PS00027">
    <property type="entry name" value="HOMEOBOX_1"/>
    <property type="match status" value="1"/>
</dbReference>
<dbReference type="PROSITE" id="PS50071">
    <property type="entry name" value="HOMEOBOX_2"/>
    <property type="match status" value="1"/>
</dbReference>
<dbReference type="PROSITE" id="PS50803">
    <property type="entry name" value="OAR"/>
    <property type="match status" value="1"/>
</dbReference>
<sequence length="315" mass="34075">MDAFKGGMSLERLPEGLRPPPPPPHDMGPSFHLARAADPREPLENSASESSDADLPDKERGGEAKGPEDGGAGSAGCGGGAEDPAKKKKQRRQRTHFTSQQLQELEATFQRNRYPDMSMREEIAVWTNLTEPRVRVWFKNRRAKWRKRERNQQLDLCKGGYVPQFSGLVQPYEDVYAAGYSYNNWAAKSLAPAPLSTKSFTFFNSMSPLSSQSMFSAPSSISSMTMPSSMGPGAVPGMPNSGLNNINNLTGSSLNSAMSPGACPYGTPASPYSVYRDTCNSSLASLRLKSKQHSSFGYGGLQGPASGLNACQYNS</sequence>
<feature type="chain" id="PRO_0000049219" description="Pituitary homeobox 1">
    <location>
        <begin position="1"/>
        <end position="315"/>
    </location>
</feature>
<feature type="DNA-binding region" description="Homeobox" evidence="4">
    <location>
        <begin position="90"/>
        <end position="149"/>
    </location>
</feature>
<feature type="region of interest" description="Disordered" evidence="6">
    <location>
        <begin position="1"/>
        <end position="104"/>
    </location>
</feature>
<feature type="region of interest" description="Interaction with PIT-1">
    <location>
        <begin position="151"/>
        <end position="280"/>
    </location>
</feature>
<feature type="short sequence motif" description="OAR" evidence="5">
    <location>
        <begin position="281"/>
        <end position="294"/>
    </location>
</feature>
<feature type="short sequence motif" description="Nuclear localization signal" evidence="3">
    <location>
        <begin position="287"/>
        <end position="291"/>
    </location>
</feature>
<feature type="compositionally biased region" description="Pro residues" evidence="6">
    <location>
        <begin position="17"/>
        <end position="26"/>
    </location>
</feature>
<feature type="compositionally biased region" description="Basic and acidic residues" evidence="6">
    <location>
        <begin position="55"/>
        <end position="68"/>
    </location>
</feature>
<feature type="compositionally biased region" description="Gly residues" evidence="6">
    <location>
        <begin position="69"/>
        <end position="81"/>
    </location>
</feature>
<feature type="compositionally biased region" description="Basic residues" evidence="6">
    <location>
        <begin position="86"/>
        <end position="95"/>
    </location>
</feature>
<feature type="modified residue" description="N-acetylmethionine" evidence="2">
    <location>
        <position position="1"/>
    </location>
</feature>
<feature type="modified residue" description="Phosphoserine" evidence="2">
    <location>
        <position position="46"/>
    </location>
</feature>
<feature type="modified residue" description="Phosphoserine" evidence="2">
    <location>
        <position position="48"/>
    </location>
</feature>
<feature type="sequence conflict" description="In Ref. 1; AAC52716." evidence="10" ref="1">
    <original>R</original>
    <variation>A</variation>
    <location>
        <position position="287"/>
    </location>
</feature>
<organism>
    <name type="scientific">Mus musculus</name>
    <name type="common">Mouse</name>
    <dbReference type="NCBI Taxonomy" id="10090"/>
    <lineage>
        <taxon>Eukaryota</taxon>
        <taxon>Metazoa</taxon>
        <taxon>Chordata</taxon>
        <taxon>Craniata</taxon>
        <taxon>Vertebrata</taxon>
        <taxon>Euteleostomi</taxon>
        <taxon>Mammalia</taxon>
        <taxon>Eutheria</taxon>
        <taxon>Euarchontoglires</taxon>
        <taxon>Glires</taxon>
        <taxon>Rodentia</taxon>
        <taxon>Myomorpha</taxon>
        <taxon>Muroidea</taxon>
        <taxon>Muridae</taxon>
        <taxon>Murinae</taxon>
        <taxon>Mus</taxon>
        <taxon>Mus</taxon>
    </lineage>
</organism>